<comment type="subunit">
    <text evidence="1">Homodimer.</text>
</comment>
<comment type="similarity">
    <text evidence="2">Belongs to the universal stress protein A family.</text>
</comment>
<comment type="sequence caution" evidence="2">
    <conflict type="erroneous initiation">
        <sequence resource="EMBL-CDS" id="AAN43389"/>
    </conflict>
    <text>Extended N-terminus.</text>
</comment>
<comment type="sequence caution" evidence="2">
    <conflict type="erroneous initiation">
        <sequence resource="EMBL-CDS" id="AAP16846"/>
    </conflict>
    <text>Extended N-terminus.</text>
</comment>
<proteinExistence type="inferred from homology"/>
<gene>
    <name type="primary">uspF</name>
    <name type="ordered locus">SF1824</name>
    <name type="ordered locus">S1449</name>
</gene>
<organism>
    <name type="scientific">Shigella flexneri</name>
    <dbReference type="NCBI Taxonomy" id="623"/>
    <lineage>
        <taxon>Bacteria</taxon>
        <taxon>Pseudomonadati</taxon>
        <taxon>Pseudomonadota</taxon>
        <taxon>Gammaproteobacteria</taxon>
        <taxon>Enterobacterales</taxon>
        <taxon>Enterobacteriaceae</taxon>
        <taxon>Shigella</taxon>
    </lineage>
</organism>
<accession>P0A4P8</accession>
<accession>Q7UCM9</accession>
<accession>Q83R76</accession>
<accession>Q8FHP3</accession>
<accession>Q8GC60</accession>
<accession>Q8X9P8</accession>
<sequence>MNRTILVPIDISDSELTQRVISHVEAEAKIDDAEVHFLTVIPSLPYYASLGLAYSAELPAMDDLKAEAKSQLEEIIKKFKLPTDRVHVHVEEGSPKDRILELAKKIPAHMIIIASHRPDITTYLLGSNAAAVVRHAECSVLVVR</sequence>
<protein>
    <recommendedName>
        <fullName>Universal stress protein F</fullName>
    </recommendedName>
</protein>
<feature type="chain" id="PRO_0000147431" description="Universal stress protein F">
    <location>
        <begin position="1"/>
        <end position="144"/>
    </location>
</feature>
<name>USPF_SHIFL</name>
<evidence type="ECO:0000250" key="1"/>
<evidence type="ECO:0000305" key="2"/>
<keyword id="KW-1185">Reference proteome</keyword>
<reference key="1">
    <citation type="journal article" date="2002" name="Nucleic Acids Res.">
        <title>Genome sequence of Shigella flexneri 2a: insights into pathogenicity through comparison with genomes of Escherichia coli K12 and O157.</title>
        <authorList>
            <person name="Jin Q."/>
            <person name="Yuan Z."/>
            <person name="Xu J."/>
            <person name="Wang Y."/>
            <person name="Shen Y."/>
            <person name="Lu W."/>
            <person name="Wang J."/>
            <person name="Liu H."/>
            <person name="Yang J."/>
            <person name="Yang F."/>
            <person name="Zhang X."/>
            <person name="Zhang J."/>
            <person name="Yang G."/>
            <person name="Wu H."/>
            <person name="Qu D."/>
            <person name="Dong J."/>
            <person name="Sun L."/>
            <person name="Xue Y."/>
            <person name="Zhao A."/>
            <person name="Gao Y."/>
            <person name="Zhu J."/>
            <person name="Kan B."/>
            <person name="Ding K."/>
            <person name="Chen S."/>
            <person name="Cheng H."/>
            <person name="Yao Z."/>
            <person name="He B."/>
            <person name="Chen R."/>
            <person name="Ma D."/>
            <person name="Qiang B."/>
            <person name="Wen Y."/>
            <person name="Hou Y."/>
            <person name="Yu J."/>
        </authorList>
    </citation>
    <scope>NUCLEOTIDE SEQUENCE [LARGE SCALE GENOMIC DNA]</scope>
    <source>
        <strain>301 / Serotype 2a</strain>
    </source>
</reference>
<reference key="2">
    <citation type="journal article" date="2003" name="Infect. Immun.">
        <title>Complete genome sequence and comparative genomics of Shigella flexneri serotype 2a strain 2457T.</title>
        <authorList>
            <person name="Wei J."/>
            <person name="Goldberg M.B."/>
            <person name="Burland V."/>
            <person name="Venkatesan M.M."/>
            <person name="Deng W."/>
            <person name="Fournier G."/>
            <person name="Mayhew G.F."/>
            <person name="Plunkett G. III"/>
            <person name="Rose D.J."/>
            <person name="Darling A."/>
            <person name="Mau B."/>
            <person name="Perna N.T."/>
            <person name="Payne S.M."/>
            <person name="Runyen-Janecky L.J."/>
            <person name="Zhou S."/>
            <person name="Schwartz D.C."/>
            <person name="Blattner F.R."/>
        </authorList>
    </citation>
    <scope>NUCLEOTIDE SEQUENCE [LARGE SCALE GENOMIC DNA]</scope>
    <source>
        <strain>ATCC 700930 / 2457T / Serotype 2a</strain>
    </source>
</reference>
<dbReference type="EMBL" id="AE005674">
    <property type="protein sequence ID" value="AAN43389.2"/>
    <property type="status" value="ALT_INIT"/>
    <property type="molecule type" value="Genomic_DNA"/>
</dbReference>
<dbReference type="EMBL" id="AE014073">
    <property type="protein sequence ID" value="AAP16846.1"/>
    <property type="status" value="ALT_INIT"/>
    <property type="molecule type" value="Genomic_DNA"/>
</dbReference>
<dbReference type="RefSeq" id="WP_001295593.1">
    <property type="nucleotide sequence ID" value="NZ_WPGW01000091.1"/>
</dbReference>
<dbReference type="SMR" id="P0A4P8"/>
<dbReference type="STRING" id="198214.SF1824"/>
<dbReference type="PaxDb" id="198214-SF1824"/>
<dbReference type="GeneID" id="93775539"/>
<dbReference type="KEGG" id="sfl:SF1824"/>
<dbReference type="KEGG" id="sfx:S1449"/>
<dbReference type="PATRIC" id="fig|198214.7.peg.2166"/>
<dbReference type="HOGENOM" id="CLU_049301_12_0_6"/>
<dbReference type="Proteomes" id="UP000001006">
    <property type="component" value="Chromosome"/>
</dbReference>
<dbReference type="Proteomes" id="UP000002673">
    <property type="component" value="Chromosome"/>
</dbReference>
<dbReference type="CDD" id="cd00293">
    <property type="entry name" value="USP-like"/>
    <property type="match status" value="1"/>
</dbReference>
<dbReference type="FunFam" id="3.40.50.620:FF:000059">
    <property type="entry name" value="Universal stress protein F"/>
    <property type="match status" value="1"/>
</dbReference>
<dbReference type="Gene3D" id="3.40.50.620">
    <property type="entry name" value="HUPs"/>
    <property type="match status" value="1"/>
</dbReference>
<dbReference type="InterPro" id="IPR014729">
    <property type="entry name" value="Rossmann-like_a/b/a_fold"/>
</dbReference>
<dbReference type="InterPro" id="IPR006015">
    <property type="entry name" value="Universal_stress_UspA"/>
</dbReference>
<dbReference type="InterPro" id="IPR006016">
    <property type="entry name" value="UspA"/>
</dbReference>
<dbReference type="NCBIfam" id="NF011581">
    <property type="entry name" value="PRK15005.1"/>
    <property type="match status" value="1"/>
</dbReference>
<dbReference type="PANTHER" id="PTHR46268">
    <property type="entry name" value="STRESS RESPONSE PROTEIN NHAX"/>
    <property type="match status" value="1"/>
</dbReference>
<dbReference type="PANTHER" id="PTHR46268:SF18">
    <property type="entry name" value="UNIVERSAL STRESS PROTEIN F"/>
    <property type="match status" value="1"/>
</dbReference>
<dbReference type="Pfam" id="PF00582">
    <property type="entry name" value="Usp"/>
    <property type="match status" value="1"/>
</dbReference>
<dbReference type="PRINTS" id="PR01438">
    <property type="entry name" value="UNVRSLSTRESS"/>
</dbReference>
<dbReference type="SUPFAM" id="SSF52402">
    <property type="entry name" value="Adenine nucleotide alpha hydrolases-like"/>
    <property type="match status" value="1"/>
</dbReference>